<accession>P48695</accession>
<name>RBL_COLOB</name>
<geneLocation type="chloroplast"/>
<keyword id="KW-0007">Acetylation</keyword>
<keyword id="KW-0113">Calvin cycle</keyword>
<keyword id="KW-0120">Carbon dioxide fixation</keyword>
<keyword id="KW-0150">Chloroplast</keyword>
<keyword id="KW-0456">Lyase</keyword>
<keyword id="KW-0460">Magnesium</keyword>
<keyword id="KW-0479">Metal-binding</keyword>
<keyword id="KW-0488">Methylation</keyword>
<keyword id="KW-0503">Monooxygenase</keyword>
<keyword id="KW-0560">Oxidoreductase</keyword>
<keyword id="KW-0601">Photorespiration</keyword>
<keyword id="KW-0602">Photosynthesis</keyword>
<keyword id="KW-0934">Plastid</keyword>
<proteinExistence type="inferred from homology"/>
<sequence>MSPLTETKAGTGFKAGVKDYRLTYYTPEYETKDTDILAAFRMTPQPGVPPEEAGAAVAAESSTGTWTTVWTDGLTSLDRYKGRCYDIEPVAGEDNQYIAYVAYPLDLFEEVSVTNLFTSIVGNVFGFKALRALRLEDLRIPPAYSKTFQGPPHGIQVERDKLNKYGRPLLGCTIKPKLGLSAKNYGRAVYECLRGGLDFTKDDENVNSQPFMRWRDRFLFVAEAIFKSQAETGEIKGHYLNATAGTSEEMMKRAQFARELGVPIIMHDYLTGGFTSNTSLSHYCRDNGLLLHIHRAMHAVIDRQKNHGIHFRVLAKALRMSGGDHIHSGTVVGKLEGEREVTLGFVDLLRDDYIEKDRSRGIYFTQDWVSMPGVLPVASGGIHVWHMPALTEIFGDDSVLQFGGGTLGHPWGNAPGAVANRVALEACVQARNEGRDLARQGNDIIREACKWSPELAAACEVWKEIKFEFETIDTL</sequence>
<evidence type="ECO:0000255" key="1">
    <source>
        <dbReference type="HAMAP-Rule" id="MF_01338"/>
    </source>
</evidence>
<feature type="propeptide" id="PRO_0000031185" evidence="1">
    <location>
        <begin position="1"/>
        <end position="2"/>
    </location>
</feature>
<feature type="chain" id="PRO_0000031186" description="Ribulose bisphosphate carboxylase large chain">
    <location>
        <begin position="3"/>
        <end position="475"/>
    </location>
</feature>
<feature type="active site" description="Proton acceptor" evidence="1">
    <location>
        <position position="175"/>
    </location>
</feature>
<feature type="active site" description="Proton acceptor" evidence="1">
    <location>
        <position position="294"/>
    </location>
</feature>
<feature type="binding site" description="in homodimeric partner" evidence="1">
    <location>
        <position position="123"/>
    </location>
    <ligand>
        <name>substrate</name>
    </ligand>
</feature>
<feature type="binding site" evidence="1">
    <location>
        <position position="173"/>
    </location>
    <ligand>
        <name>substrate</name>
    </ligand>
</feature>
<feature type="binding site" evidence="1">
    <location>
        <position position="177"/>
    </location>
    <ligand>
        <name>substrate</name>
    </ligand>
</feature>
<feature type="binding site" description="via carbamate group" evidence="1">
    <location>
        <position position="201"/>
    </location>
    <ligand>
        <name>Mg(2+)</name>
        <dbReference type="ChEBI" id="CHEBI:18420"/>
    </ligand>
</feature>
<feature type="binding site" evidence="1">
    <location>
        <position position="203"/>
    </location>
    <ligand>
        <name>Mg(2+)</name>
        <dbReference type="ChEBI" id="CHEBI:18420"/>
    </ligand>
</feature>
<feature type="binding site" evidence="1">
    <location>
        <position position="204"/>
    </location>
    <ligand>
        <name>Mg(2+)</name>
        <dbReference type="ChEBI" id="CHEBI:18420"/>
    </ligand>
</feature>
<feature type="binding site" evidence="1">
    <location>
        <position position="295"/>
    </location>
    <ligand>
        <name>substrate</name>
    </ligand>
</feature>
<feature type="binding site" evidence="1">
    <location>
        <position position="327"/>
    </location>
    <ligand>
        <name>substrate</name>
    </ligand>
</feature>
<feature type="binding site" evidence="1">
    <location>
        <position position="379"/>
    </location>
    <ligand>
        <name>substrate</name>
    </ligand>
</feature>
<feature type="site" description="Transition state stabilizer" evidence="1">
    <location>
        <position position="334"/>
    </location>
</feature>
<feature type="modified residue" description="N-acetylproline" evidence="1">
    <location>
        <position position="3"/>
    </location>
</feature>
<feature type="modified residue" description="N6,N6,N6-trimethyllysine" evidence="1">
    <location>
        <position position="14"/>
    </location>
</feature>
<feature type="modified residue" description="N6-carboxylysine" evidence="1">
    <location>
        <position position="201"/>
    </location>
</feature>
<comment type="function">
    <text evidence="1">RuBisCO catalyzes two reactions: the carboxylation of D-ribulose 1,5-bisphosphate, the primary event in carbon dioxide fixation, as well as the oxidative fragmentation of the pentose substrate in the photorespiration process. Both reactions occur simultaneously and in competition at the same active site.</text>
</comment>
<comment type="catalytic activity">
    <reaction evidence="1">
        <text>2 (2R)-3-phosphoglycerate + 2 H(+) = D-ribulose 1,5-bisphosphate + CO2 + H2O</text>
        <dbReference type="Rhea" id="RHEA:23124"/>
        <dbReference type="ChEBI" id="CHEBI:15377"/>
        <dbReference type="ChEBI" id="CHEBI:15378"/>
        <dbReference type="ChEBI" id="CHEBI:16526"/>
        <dbReference type="ChEBI" id="CHEBI:57870"/>
        <dbReference type="ChEBI" id="CHEBI:58272"/>
        <dbReference type="EC" id="4.1.1.39"/>
    </reaction>
</comment>
<comment type="catalytic activity">
    <reaction evidence="1">
        <text>D-ribulose 1,5-bisphosphate + O2 = 2-phosphoglycolate + (2R)-3-phosphoglycerate + 2 H(+)</text>
        <dbReference type="Rhea" id="RHEA:36631"/>
        <dbReference type="ChEBI" id="CHEBI:15378"/>
        <dbReference type="ChEBI" id="CHEBI:15379"/>
        <dbReference type="ChEBI" id="CHEBI:57870"/>
        <dbReference type="ChEBI" id="CHEBI:58033"/>
        <dbReference type="ChEBI" id="CHEBI:58272"/>
    </reaction>
</comment>
<comment type="cofactor">
    <cofactor evidence="1">
        <name>Mg(2+)</name>
        <dbReference type="ChEBI" id="CHEBI:18420"/>
    </cofactor>
    <text evidence="1">Binds 1 Mg(2+) ion per subunit.</text>
</comment>
<comment type="subunit">
    <text evidence="1">Heterohexadecamer of 8 large chains and 8 small chains.</text>
</comment>
<comment type="subcellular location">
    <subcellularLocation>
        <location>Plastid</location>
        <location>Chloroplast</location>
    </subcellularLocation>
</comment>
<comment type="miscellaneous">
    <text evidence="1">The basic functional RuBisCO is composed of a large chain homodimer in a 'head-to-tail' conformation. In form I RuBisCO this homodimer is arranged in a barrel-like tetramer with the small subunits forming a tetrameric 'cap' on each end of the 'barrel'.</text>
</comment>
<comment type="similarity">
    <text evidence="1">Belongs to the RuBisCO large chain family. Type I subfamily.</text>
</comment>
<gene>
    <name evidence="1" type="primary">rbcL</name>
</gene>
<protein>
    <recommendedName>
        <fullName evidence="1">Ribulose bisphosphate carboxylase large chain</fullName>
        <shortName evidence="1">RuBisCO large subunit</shortName>
        <ecNumber evidence="1">4.1.1.39</ecNumber>
    </recommendedName>
</protein>
<dbReference type="EC" id="4.1.1.39" evidence="1"/>
<dbReference type="EMBL" id="L13477">
    <property type="protein sequence ID" value="AAA53407.1"/>
    <property type="molecule type" value="Genomic_DNA"/>
</dbReference>
<dbReference type="SMR" id="P48695"/>
<dbReference type="GO" id="GO:0009507">
    <property type="term" value="C:chloroplast"/>
    <property type="evidence" value="ECO:0007669"/>
    <property type="project" value="UniProtKB-SubCell"/>
</dbReference>
<dbReference type="GO" id="GO:0000287">
    <property type="term" value="F:magnesium ion binding"/>
    <property type="evidence" value="ECO:0007669"/>
    <property type="project" value="UniProtKB-UniRule"/>
</dbReference>
<dbReference type="GO" id="GO:0004497">
    <property type="term" value="F:monooxygenase activity"/>
    <property type="evidence" value="ECO:0007669"/>
    <property type="project" value="UniProtKB-KW"/>
</dbReference>
<dbReference type="GO" id="GO:0016984">
    <property type="term" value="F:ribulose-bisphosphate carboxylase activity"/>
    <property type="evidence" value="ECO:0007669"/>
    <property type="project" value="UniProtKB-UniRule"/>
</dbReference>
<dbReference type="GO" id="GO:0009853">
    <property type="term" value="P:photorespiration"/>
    <property type="evidence" value="ECO:0007669"/>
    <property type="project" value="UniProtKB-KW"/>
</dbReference>
<dbReference type="GO" id="GO:0019253">
    <property type="term" value="P:reductive pentose-phosphate cycle"/>
    <property type="evidence" value="ECO:0007669"/>
    <property type="project" value="UniProtKB-UniRule"/>
</dbReference>
<dbReference type="CDD" id="cd08212">
    <property type="entry name" value="RuBisCO_large_I"/>
    <property type="match status" value="1"/>
</dbReference>
<dbReference type="FunFam" id="3.20.20.110:FF:000001">
    <property type="entry name" value="Ribulose bisphosphate carboxylase large chain"/>
    <property type="match status" value="1"/>
</dbReference>
<dbReference type="FunFam" id="3.30.70.150:FF:000001">
    <property type="entry name" value="Ribulose bisphosphate carboxylase large chain"/>
    <property type="match status" value="1"/>
</dbReference>
<dbReference type="Gene3D" id="3.20.20.110">
    <property type="entry name" value="Ribulose bisphosphate carboxylase, large subunit, C-terminal domain"/>
    <property type="match status" value="1"/>
</dbReference>
<dbReference type="Gene3D" id="3.30.70.150">
    <property type="entry name" value="RuBisCO large subunit, N-terminal domain"/>
    <property type="match status" value="1"/>
</dbReference>
<dbReference type="HAMAP" id="MF_01338">
    <property type="entry name" value="RuBisCO_L_type1"/>
    <property type="match status" value="1"/>
</dbReference>
<dbReference type="InterPro" id="IPR033966">
    <property type="entry name" value="RuBisCO"/>
</dbReference>
<dbReference type="InterPro" id="IPR020878">
    <property type="entry name" value="RuBisCo_large_chain_AS"/>
</dbReference>
<dbReference type="InterPro" id="IPR000685">
    <property type="entry name" value="RuBisCO_lsu_C"/>
</dbReference>
<dbReference type="InterPro" id="IPR036376">
    <property type="entry name" value="RuBisCO_lsu_C_sf"/>
</dbReference>
<dbReference type="InterPro" id="IPR017443">
    <property type="entry name" value="RuBisCO_lsu_fd_N"/>
</dbReference>
<dbReference type="InterPro" id="IPR036422">
    <property type="entry name" value="RuBisCO_lsu_N_sf"/>
</dbReference>
<dbReference type="InterPro" id="IPR020888">
    <property type="entry name" value="RuBisCO_lsuI"/>
</dbReference>
<dbReference type="NCBIfam" id="NF003252">
    <property type="entry name" value="PRK04208.1"/>
    <property type="match status" value="1"/>
</dbReference>
<dbReference type="PANTHER" id="PTHR42704">
    <property type="entry name" value="RIBULOSE BISPHOSPHATE CARBOXYLASE"/>
    <property type="match status" value="1"/>
</dbReference>
<dbReference type="PANTHER" id="PTHR42704:SF17">
    <property type="entry name" value="RIBULOSE BISPHOSPHATE CARBOXYLASE LARGE CHAIN"/>
    <property type="match status" value="1"/>
</dbReference>
<dbReference type="Pfam" id="PF00016">
    <property type="entry name" value="RuBisCO_large"/>
    <property type="match status" value="1"/>
</dbReference>
<dbReference type="Pfam" id="PF02788">
    <property type="entry name" value="RuBisCO_large_N"/>
    <property type="match status" value="1"/>
</dbReference>
<dbReference type="SFLD" id="SFLDG01052">
    <property type="entry name" value="RuBisCO"/>
    <property type="match status" value="1"/>
</dbReference>
<dbReference type="SFLD" id="SFLDS00014">
    <property type="entry name" value="RuBisCO"/>
    <property type="match status" value="1"/>
</dbReference>
<dbReference type="SFLD" id="SFLDG00301">
    <property type="entry name" value="RuBisCO-like_proteins"/>
    <property type="match status" value="1"/>
</dbReference>
<dbReference type="SUPFAM" id="SSF51649">
    <property type="entry name" value="RuBisCo, C-terminal domain"/>
    <property type="match status" value="1"/>
</dbReference>
<dbReference type="SUPFAM" id="SSF54966">
    <property type="entry name" value="RuBisCO, large subunit, small (N-terminal) domain"/>
    <property type="match status" value="1"/>
</dbReference>
<dbReference type="PROSITE" id="PS00157">
    <property type="entry name" value="RUBISCO_LARGE"/>
    <property type="match status" value="1"/>
</dbReference>
<reference key="1">
    <citation type="journal article" date="1994" name="Mol. Phylogenet. Evol.">
        <title>Phylogenetic analysis of green plant rbcL sequences.</title>
        <authorList>
            <person name="Manhart J.R."/>
        </authorList>
    </citation>
    <scope>NUCLEOTIDE SEQUENCE [GENOMIC DNA]</scope>
</reference>
<organism>
    <name type="scientific">Coleochaete orbicularis</name>
    <name type="common">Charophycean green alga</name>
    <dbReference type="NCBI Taxonomy" id="3124"/>
    <lineage>
        <taxon>Eukaryota</taxon>
        <taxon>Viridiplantae</taxon>
        <taxon>Streptophyta</taxon>
        <taxon>Coleochaetophyceae</taxon>
        <taxon>Coleochaetales</taxon>
        <taxon>Coleochaetaceae</taxon>
        <taxon>Coleochaete</taxon>
    </lineage>
</organism>